<keyword id="KW-0233">DNA recombination</keyword>
<keyword id="KW-0238">DNA-binding</keyword>
<keyword id="KW-1185">Reference proteome</keyword>
<keyword id="KW-0814">Transposable element</keyword>
<keyword id="KW-0815">Transposition</keyword>
<gene>
    <name type="primary">insE3</name>
    <name type="ordered locus">b0540</name>
    <name type="ordered locus">JW5074</name>
</gene>
<evidence type="ECO:0000256" key="1">
    <source>
        <dbReference type="SAM" id="MobiDB-lite"/>
    </source>
</evidence>
<evidence type="ECO:0000305" key="2"/>
<reference key="1">
    <citation type="submission" date="1997-01" db="EMBL/GenBank/DDBJ databases">
        <title>Sequence of minutes 4-25 of Escherichia coli.</title>
        <authorList>
            <person name="Chung E."/>
            <person name="Allen E."/>
            <person name="Araujo R."/>
            <person name="Aparicio A.M."/>
            <person name="Davis K."/>
            <person name="Duncan M."/>
            <person name="Federspiel N."/>
            <person name="Hyman R."/>
            <person name="Kalman S."/>
            <person name="Komp C."/>
            <person name="Kurdi O."/>
            <person name="Lew H."/>
            <person name="Lin D."/>
            <person name="Namath A."/>
            <person name="Oefner P."/>
            <person name="Roberts D."/>
            <person name="Schramm S."/>
            <person name="Davis R.W."/>
        </authorList>
    </citation>
    <scope>NUCLEOTIDE SEQUENCE [LARGE SCALE GENOMIC DNA]</scope>
    <source>
        <strain>K12 / MG1655 / ATCC 47076</strain>
    </source>
</reference>
<reference key="2">
    <citation type="journal article" date="1997" name="Science">
        <title>The complete genome sequence of Escherichia coli K-12.</title>
        <authorList>
            <person name="Blattner F.R."/>
            <person name="Plunkett G. III"/>
            <person name="Bloch C.A."/>
            <person name="Perna N.T."/>
            <person name="Burland V."/>
            <person name="Riley M."/>
            <person name="Collado-Vides J."/>
            <person name="Glasner J.D."/>
            <person name="Rode C.K."/>
            <person name="Mayhew G.F."/>
            <person name="Gregor J."/>
            <person name="Davis N.W."/>
            <person name="Kirkpatrick H.A."/>
            <person name="Goeden M.A."/>
            <person name="Rose D.J."/>
            <person name="Mau B."/>
            <person name="Shao Y."/>
        </authorList>
    </citation>
    <scope>NUCLEOTIDE SEQUENCE [LARGE SCALE GENOMIC DNA]</scope>
    <source>
        <strain>K12 / MG1655 / ATCC 47076</strain>
    </source>
</reference>
<reference key="3">
    <citation type="journal article" date="2006" name="Mol. Syst. Biol.">
        <title>Highly accurate genome sequences of Escherichia coli K-12 strains MG1655 and W3110.</title>
        <authorList>
            <person name="Hayashi K."/>
            <person name="Morooka N."/>
            <person name="Yamamoto Y."/>
            <person name="Fujita K."/>
            <person name="Isono K."/>
            <person name="Choi S."/>
            <person name="Ohtsubo E."/>
            <person name="Baba T."/>
            <person name="Wanner B.L."/>
            <person name="Mori H."/>
            <person name="Horiuchi T."/>
        </authorList>
    </citation>
    <scope>NUCLEOTIDE SEQUENCE [LARGE SCALE GENOMIC DNA]</scope>
    <source>
        <strain>K12 / W3110 / ATCC 27325 / DSM 5911</strain>
    </source>
</reference>
<proteinExistence type="inferred from homology"/>
<protein>
    <recommendedName>
        <fullName>Transposase InsE for insertion sequence IS3C</fullName>
    </recommendedName>
</protein>
<accession>P0CF68</accession>
<accession>P0ADH3</accession>
<accession>P77681</accession>
<accession>Q2MCC3</accession>
<accession>Q9S136</accession>
<sequence>MTKTVSTSKKPRKQHSPEFRSEALKLAERIGVTAAARELSLYESQLYNWRSKQQNQQTSSERELEMSTEIARLKRQLAERDEELAILQKAATYFAKRLK</sequence>
<feature type="chain" id="PRO_0000393744" description="Transposase InsE for insertion sequence IS3C">
    <location>
        <begin position="1"/>
        <end position="99"/>
    </location>
</feature>
<feature type="region of interest" description="Disordered" evidence="1">
    <location>
        <begin position="1"/>
        <end position="21"/>
    </location>
</feature>
<dbReference type="EMBL" id="U82598">
    <property type="protein sequence ID" value="AAB40737.1"/>
    <property type="status" value="ALT_INIT"/>
    <property type="molecule type" value="Genomic_DNA"/>
</dbReference>
<dbReference type="EMBL" id="U00096">
    <property type="protein sequence ID" value="AAC73641.2"/>
    <property type="molecule type" value="Genomic_DNA"/>
</dbReference>
<dbReference type="EMBL" id="AP009048">
    <property type="protein sequence ID" value="BAE76315.1"/>
    <property type="status" value="ALT_INIT"/>
    <property type="molecule type" value="Genomic_DNA"/>
</dbReference>
<dbReference type="PIR" id="A64845">
    <property type="entry name" value="A64845"/>
</dbReference>
<dbReference type="RefSeq" id="NP_061380.1">
    <property type="nucleotide sequence ID" value="NC_002483.1"/>
</dbReference>
<dbReference type="RefSeq" id="NP_061395.1">
    <property type="nucleotide sequence ID" value="NC_002483.1"/>
</dbReference>
<dbReference type="RefSeq" id="NP_415072.2">
    <property type="nucleotide sequence ID" value="NC_000913.3"/>
</dbReference>
<dbReference type="SMR" id="P0CF68"/>
<dbReference type="FunCoup" id="P0CF68">
    <property type="interactions" value="43"/>
</dbReference>
<dbReference type="EnsemblBacteria" id="AAC73641">
    <property type="protein sequence ID" value="AAC73641"/>
    <property type="gene ID" value="b0540"/>
</dbReference>
<dbReference type="GeneID" id="945759"/>
<dbReference type="KEGG" id="ecj:JW5074"/>
<dbReference type="KEGG" id="eco:b0298"/>
<dbReference type="KEGG" id="eco:b0373"/>
<dbReference type="KEGG" id="eco:b0540"/>
<dbReference type="KEGG" id="eco:b1027"/>
<dbReference type="KEGG" id="eco:b2088"/>
<dbReference type="KEGG" id="ecoc:C3026_01465"/>
<dbReference type="KEGG" id="ecoc:C3026_02655"/>
<dbReference type="KEGG" id="ecoc:C3026_06255"/>
<dbReference type="KEGG" id="ecoc:C3026_11725"/>
<dbReference type="KEGG" id="ecoc:C3026_24095"/>
<dbReference type="KEGG" id="ecoc:C3026_24185"/>
<dbReference type="KEGG" id="ecoc:C3026_24640"/>
<dbReference type="EchoBASE" id="EB4715"/>
<dbReference type="HOGENOM" id="CLU_027402_18_0_6"/>
<dbReference type="InParanoid" id="P0CF68"/>
<dbReference type="OMA" id="LHESQIY"/>
<dbReference type="PhylomeDB" id="P0CF68"/>
<dbReference type="BioCyc" id="EcoCyc:MONOMER0-4243"/>
<dbReference type="PRO" id="PR:P0CF68"/>
<dbReference type="Proteomes" id="UP000000625">
    <property type="component" value="Chromosome"/>
</dbReference>
<dbReference type="GO" id="GO:0003677">
    <property type="term" value="F:DNA binding"/>
    <property type="evidence" value="ECO:0007669"/>
    <property type="project" value="UniProtKB-KW"/>
</dbReference>
<dbReference type="GO" id="GO:0004803">
    <property type="term" value="F:transposase activity"/>
    <property type="evidence" value="ECO:0007669"/>
    <property type="project" value="InterPro"/>
</dbReference>
<dbReference type="GO" id="GO:0006313">
    <property type="term" value="P:DNA transposition"/>
    <property type="evidence" value="ECO:0007669"/>
    <property type="project" value="InterPro"/>
</dbReference>
<dbReference type="InterPro" id="IPR009057">
    <property type="entry name" value="Homeodomain-like_sf"/>
</dbReference>
<dbReference type="InterPro" id="IPR051839">
    <property type="entry name" value="RD_transcriptional_regulator"/>
</dbReference>
<dbReference type="InterPro" id="IPR002514">
    <property type="entry name" value="Transposase_8"/>
</dbReference>
<dbReference type="PANTHER" id="PTHR33215">
    <property type="entry name" value="PROTEIN DISTAL ANTENNA"/>
    <property type="match status" value="1"/>
</dbReference>
<dbReference type="PANTHER" id="PTHR33215:SF6">
    <property type="entry name" value="TRANSPOSASE INSE FOR INSERTION SEQUENCE IS3A-RELATED"/>
    <property type="match status" value="1"/>
</dbReference>
<dbReference type="Pfam" id="PF01527">
    <property type="entry name" value="HTH_Tnp_1"/>
    <property type="match status" value="1"/>
</dbReference>
<dbReference type="SUPFAM" id="SSF46689">
    <property type="entry name" value="Homeodomain-like"/>
    <property type="match status" value="1"/>
</dbReference>
<name>INSE3_ECOLI</name>
<organism>
    <name type="scientific">Escherichia coli (strain K12)</name>
    <dbReference type="NCBI Taxonomy" id="83333"/>
    <lineage>
        <taxon>Bacteria</taxon>
        <taxon>Pseudomonadati</taxon>
        <taxon>Pseudomonadota</taxon>
        <taxon>Gammaproteobacteria</taxon>
        <taxon>Enterobacterales</taxon>
        <taxon>Enterobacteriaceae</taxon>
        <taxon>Escherichia</taxon>
    </lineage>
</organism>
<comment type="function">
    <text>Involved in the transposition of the insertion sequence IS3.</text>
</comment>
<comment type="similarity">
    <text evidence="2">Belongs to the transposase 8 family.</text>
</comment>
<comment type="sequence caution" evidence="2">
    <conflict type="erroneous initiation">
        <sequence resource="EMBL-CDS" id="AAB40737"/>
    </conflict>
    <text>Extended N-terminus.</text>
</comment>
<comment type="sequence caution" evidence="2">
    <conflict type="erroneous initiation">
        <sequence resource="EMBL-CDS" id="BAE76315"/>
    </conflict>
    <text>Extended N-terminus.</text>
</comment>